<reference key="1">
    <citation type="journal article" date="2001" name="Nature">
        <title>Genome sequence of enterohaemorrhagic Escherichia coli O157:H7.</title>
        <authorList>
            <person name="Perna N.T."/>
            <person name="Plunkett G. III"/>
            <person name="Burland V."/>
            <person name="Mau B."/>
            <person name="Glasner J.D."/>
            <person name="Rose D.J."/>
            <person name="Mayhew G.F."/>
            <person name="Evans P.S."/>
            <person name="Gregor J."/>
            <person name="Kirkpatrick H.A."/>
            <person name="Posfai G."/>
            <person name="Hackett J."/>
            <person name="Klink S."/>
            <person name="Boutin A."/>
            <person name="Shao Y."/>
            <person name="Miller L."/>
            <person name="Grotbeck E.J."/>
            <person name="Davis N.W."/>
            <person name="Lim A."/>
            <person name="Dimalanta E.T."/>
            <person name="Potamousis K."/>
            <person name="Apodaca J."/>
            <person name="Anantharaman T.S."/>
            <person name="Lin J."/>
            <person name="Yen G."/>
            <person name="Schwartz D.C."/>
            <person name="Welch R.A."/>
            <person name="Blattner F.R."/>
        </authorList>
    </citation>
    <scope>NUCLEOTIDE SEQUENCE [LARGE SCALE GENOMIC DNA]</scope>
    <source>
        <strain>O157:H7 / EDL933 / ATCC 700927 / EHEC</strain>
    </source>
</reference>
<reference key="2">
    <citation type="journal article" date="2001" name="DNA Res.">
        <title>Complete genome sequence of enterohemorrhagic Escherichia coli O157:H7 and genomic comparison with a laboratory strain K-12.</title>
        <authorList>
            <person name="Hayashi T."/>
            <person name="Makino K."/>
            <person name="Ohnishi M."/>
            <person name="Kurokawa K."/>
            <person name="Ishii K."/>
            <person name="Yokoyama K."/>
            <person name="Han C.-G."/>
            <person name="Ohtsubo E."/>
            <person name="Nakayama K."/>
            <person name="Murata T."/>
            <person name="Tanaka M."/>
            <person name="Tobe T."/>
            <person name="Iida T."/>
            <person name="Takami H."/>
            <person name="Honda T."/>
            <person name="Sasakawa C."/>
            <person name="Ogasawara N."/>
            <person name="Yasunaga T."/>
            <person name="Kuhara S."/>
            <person name="Shiba T."/>
            <person name="Hattori M."/>
            <person name="Shinagawa H."/>
        </authorList>
    </citation>
    <scope>NUCLEOTIDE SEQUENCE [LARGE SCALE GENOMIC DNA]</scope>
    <source>
        <strain>O157:H7 / Sakai / RIMD 0509952 / EHEC</strain>
    </source>
</reference>
<sequence>MKFPGKRKSKHYFPVNARDPLLQQFQPENETSAAWVVGIDQTLVDIEAKVDDEFIERYGLSAGHSLVIEDDVAEALYQELKQKNLITHQFAGGTIGNTMHNYSVLADDRSVLLGVMCSNIEIGSYAYRYLCNTSSRTDLNYLQGVDGPIGRCFTLIGESGERTFAISPGHMNQLRAESIPEDVIAGASALVLTSYLVRCKPGEPMPEATMKAIEYAKKYNVPVVLTLGTKFVIAENPQWWQQFLKDHVSILAMNEDEAEALTGESDPLLASDKALDWVDLVLCTAGPIGLYMAGFTEDEAKRKTQHPLLPGAIAEFNQYEFSRAMRHKDCQNPLRVYSHIAPYMGGPEKIMNTNGAGDGALAALLHDITANSYHRSNVPNSSKHKFTWLTYSSLAQVCKYANRVSYQVLNQHSPRLTRGLPEREDSLEESYWDR</sequence>
<dbReference type="EC" id="2.7.1.73" evidence="1"/>
<dbReference type="EMBL" id="AE005174">
    <property type="protein sequence ID" value="AAG54826.1"/>
    <property type="molecule type" value="Genomic_DNA"/>
</dbReference>
<dbReference type="EMBL" id="BA000007">
    <property type="protein sequence ID" value="BAB33953.1"/>
    <property type="molecule type" value="Genomic_DNA"/>
</dbReference>
<dbReference type="PIR" id="B90695">
    <property type="entry name" value="B90695"/>
</dbReference>
<dbReference type="PIR" id="F85545">
    <property type="entry name" value="F85545"/>
</dbReference>
<dbReference type="RefSeq" id="NP_308557.1">
    <property type="nucleotide sequence ID" value="NC_002695.1"/>
</dbReference>
<dbReference type="RefSeq" id="WP_000671574.1">
    <property type="nucleotide sequence ID" value="NZ_VOAI01000005.1"/>
</dbReference>
<dbReference type="SMR" id="P0AEW8"/>
<dbReference type="STRING" id="155864.Z0596"/>
<dbReference type="GeneID" id="914634"/>
<dbReference type="GeneID" id="93776973"/>
<dbReference type="KEGG" id="ece:Z0596"/>
<dbReference type="KEGG" id="ecs:ECs_0530"/>
<dbReference type="PATRIC" id="fig|386585.9.peg.637"/>
<dbReference type="eggNOG" id="COG0524">
    <property type="taxonomic scope" value="Bacteria"/>
</dbReference>
<dbReference type="HOGENOM" id="CLU_060237_0_0_6"/>
<dbReference type="OMA" id="LLGVMCN"/>
<dbReference type="UniPathway" id="UPA00591">
    <property type="reaction ID" value="UER00647"/>
</dbReference>
<dbReference type="UniPathway" id="UPA00909"/>
<dbReference type="Proteomes" id="UP000000558">
    <property type="component" value="Chromosome"/>
</dbReference>
<dbReference type="Proteomes" id="UP000002519">
    <property type="component" value="Chromosome"/>
</dbReference>
<dbReference type="GO" id="GO:0005524">
    <property type="term" value="F:ATP binding"/>
    <property type="evidence" value="ECO:0007669"/>
    <property type="project" value="UniProtKB-UniRule"/>
</dbReference>
<dbReference type="GO" id="GO:0106366">
    <property type="term" value="F:guanosine kinase activity"/>
    <property type="evidence" value="ECO:0007669"/>
    <property type="project" value="InterPro"/>
</dbReference>
<dbReference type="GO" id="GO:0008906">
    <property type="term" value="F:inosine kinase activity"/>
    <property type="evidence" value="ECO:0007669"/>
    <property type="project" value="UniProtKB-UniRule"/>
</dbReference>
<dbReference type="GO" id="GO:0032263">
    <property type="term" value="P:GMP salvage"/>
    <property type="evidence" value="ECO:0007669"/>
    <property type="project" value="UniProtKB-UniRule"/>
</dbReference>
<dbReference type="GO" id="GO:0032264">
    <property type="term" value="P:IMP salvage"/>
    <property type="evidence" value="ECO:0007669"/>
    <property type="project" value="UniProtKB-UniRule"/>
</dbReference>
<dbReference type="GO" id="GO:0006166">
    <property type="term" value="P:purine ribonucleoside salvage"/>
    <property type="evidence" value="ECO:0007669"/>
    <property type="project" value="UniProtKB-KW"/>
</dbReference>
<dbReference type="Gene3D" id="3.40.1190.20">
    <property type="match status" value="1"/>
</dbReference>
<dbReference type="HAMAP" id="MF_02246">
    <property type="entry name" value="Gua_Ino_kinase"/>
    <property type="match status" value="1"/>
</dbReference>
<dbReference type="InterPro" id="IPR052700">
    <property type="entry name" value="Carb_kinase_PfkB-like"/>
</dbReference>
<dbReference type="InterPro" id="IPR002173">
    <property type="entry name" value="Carboh/pur_kinase_PfkB_CS"/>
</dbReference>
<dbReference type="InterPro" id="IPR046405">
    <property type="entry name" value="IngK"/>
</dbReference>
<dbReference type="InterPro" id="IPR011611">
    <property type="entry name" value="PfkB_dom"/>
</dbReference>
<dbReference type="InterPro" id="IPR029056">
    <property type="entry name" value="Ribokinase-like"/>
</dbReference>
<dbReference type="NCBIfam" id="NF011655">
    <property type="entry name" value="PRK15074.1"/>
    <property type="match status" value="1"/>
</dbReference>
<dbReference type="PANTHER" id="PTHR43320:SF3">
    <property type="entry name" value="CARBOHYDRATE KINASE PFKB DOMAIN-CONTAINING PROTEIN"/>
    <property type="match status" value="1"/>
</dbReference>
<dbReference type="PANTHER" id="PTHR43320">
    <property type="entry name" value="SUGAR KINASE"/>
    <property type="match status" value="1"/>
</dbReference>
<dbReference type="Pfam" id="PF00294">
    <property type="entry name" value="PfkB"/>
    <property type="match status" value="1"/>
</dbReference>
<dbReference type="SUPFAM" id="SSF53613">
    <property type="entry name" value="Ribokinase-like"/>
    <property type="match status" value="1"/>
</dbReference>
<dbReference type="PROSITE" id="PS00584">
    <property type="entry name" value="PFKB_KINASES_2"/>
    <property type="match status" value="1"/>
</dbReference>
<gene>
    <name evidence="1" type="primary">gsk</name>
    <name type="ordered locus">Z0596</name>
    <name type="ordered locus">ECs0530</name>
</gene>
<protein>
    <recommendedName>
        <fullName evidence="1">Guanosine-inosine kinase</fullName>
        <ecNumber evidence="1">2.7.1.73</ecNumber>
    </recommendedName>
</protein>
<name>INGK_ECO57</name>
<evidence type="ECO:0000255" key="1">
    <source>
        <dbReference type="HAMAP-Rule" id="MF_02246"/>
    </source>
</evidence>
<evidence type="ECO:0000305" key="2"/>
<proteinExistence type="inferred from homology"/>
<comment type="function">
    <text evidence="1">Catalyzes the phosphorylation of guanosine and inosine to GMP and IMP, respectively.</text>
</comment>
<comment type="catalytic activity">
    <reaction evidence="1">
        <text>guanosine + ATP = GMP + ADP + H(+)</text>
        <dbReference type="Rhea" id="RHEA:27710"/>
        <dbReference type="ChEBI" id="CHEBI:15378"/>
        <dbReference type="ChEBI" id="CHEBI:16750"/>
        <dbReference type="ChEBI" id="CHEBI:30616"/>
        <dbReference type="ChEBI" id="CHEBI:58115"/>
        <dbReference type="ChEBI" id="CHEBI:456216"/>
        <dbReference type="EC" id="2.7.1.73"/>
    </reaction>
</comment>
<comment type="catalytic activity">
    <reaction evidence="1">
        <text>inosine + ATP = IMP + ADP + H(+)</text>
        <dbReference type="Rhea" id="RHEA:21140"/>
        <dbReference type="ChEBI" id="CHEBI:15378"/>
        <dbReference type="ChEBI" id="CHEBI:17596"/>
        <dbReference type="ChEBI" id="CHEBI:30616"/>
        <dbReference type="ChEBI" id="CHEBI:58053"/>
        <dbReference type="ChEBI" id="CHEBI:456216"/>
        <dbReference type="EC" id="2.7.1.73"/>
    </reaction>
</comment>
<comment type="cofactor">
    <cofactor evidence="1">
        <name>Mg(2+)</name>
        <dbReference type="ChEBI" id="CHEBI:18420"/>
    </cofactor>
</comment>
<comment type="pathway">
    <text evidence="1">Purine metabolism; IMP biosynthesis via salvage pathway; IMP from inosine: step 1/1.</text>
</comment>
<comment type="pathway">
    <text evidence="1">Purine metabolism; GMP biosynthesis via salvage pathway.</text>
</comment>
<comment type="similarity">
    <text evidence="1 2">Belongs to the carbohydrate kinase PfkB family.</text>
</comment>
<accession>P0AEW8</accession>
<accession>P22937</accession>
<keyword id="KW-0067">ATP-binding</keyword>
<keyword id="KW-0418">Kinase</keyword>
<keyword id="KW-0460">Magnesium</keyword>
<keyword id="KW-0547">Nucleotide-binding</keyword>
<keyword id="KW-0660">Purine salvage</keyword>
<keyword id="KW-1185">Reference proteome</keyword>
<keyword id="KW-0808">Transferase</keyword>
<organism>
    <name type="scientific">Escherichia coli O157:H7</name>
    <dbReference type="NCBI Taxonomy" id="83334"/>
    <lineage>
        <taxon>Bacteria</taxon>
        <taxon>Pseudomonadati</taxon>
        <taxon>Pseudomonadota</taxon>
        <taxon>Gammaproteobacteria</taxon>
        <taxon>Enterobacterales</taxon>
        <taxon>Enterobacteriaceae</taxon>
        <taxon>Escherichia</taxon>
    </lineage>
</organism>
<feature type="chain" id="PRO_0000080071" description="Guanosine-inosine kinase">
    <location>
        <begin position="1"/>
        <end position="434"/>
    </location>
</feature>
<feature type="binding site" evidence="1">
    <location>
        <begin position="40"/>
        <end position="45"/>
    </location>
    <ligand>
        <name>GMP</name>
        <dbReference type="ChEBI" id="CHEBI:58115"/>
    </ligand>
</feature>
<feature type="binding site" evidence="1">
    <location>
        <begin position="93"/>
        <end position="97"/>
    </location>
    <ligand>
        <name>GMP</name>
        <dbReference type="ChEBI" id="CHEBI:58115"/>
    </ligand>
</feature>
<feature type="binding site" evidence="1">
    <location>
        <position position="198"/>
    </location>
    <ligand>
        <name>GMP</name>
        <dbReference type="ChEBI" id="CHEBI:58115"/>
    </ligand>
</feature>
<feature type="binding site" evidence="1">
    <location>
        <begin position="284"/>
        <end position="289"/>
    </location>
    <ligand>
        <name>ATP</name>
        <dbReference type="ChEBI" id="CHEBI:30616"/>
    </ligand>
</feature>
<feature type="binding site" evidence="1">
    <location>
        <position position="357"/>
    </location>
    <ligand>
        <name>ATP</name>
        <dbReference type="ChEBI" id="CHEBI:30616"/>
    </ligand>
</feature>
<feature type="binding site" evidence="1">
    <location>
        <position position="402"/>
    </location>
    <ligand>
        <name>ATP</name>
        <dbReference type="ChEBI" id="CHEBI:30616"/>
    </ligand>
</feature>